<reference key="1">
    <citation type="journal article" date="2005" name="J. Infect. Dis.">
        <title>Genome sequence of a serotype M28 strain of group A Streptococcus: potential new insights into puerperal sepsis and bacterial disease specificity.</title>
        <authorList>
            <person name="Green N.M."/>
            <person name="Zhang S."/>
            <person name="Porcella S.F."/>
            <person name="Nagiec M.J."/>
            <person name="Barbian K.D."/>
            <person name="Beres S.B."/>
            <person name="Lefebvre R.B."/>
            <person name="Musser J.M."/>
        </authorList>
    </citation>
    <scope>NUCLEOTIDE SEQUENCE [LARGE SCALE GENOMIC DNA]</scope>
    <source>
        <strain>MGAS6180</strain>
    </source>
</reference>
<sequence>MSKFNRIHLVVLDSVGIGAAPDADKFFNAGVADTDSDTLGHISETAGLSVPNMAKIGLGNISRPIPLKTVPTEDNPTGYVTKLEEVSLGKDTMTGHWEIMGLNITEPFDTFWNGFPEEILTKIEEFSGRKIIREANKPYSGTAVIDDFGSRQMETGELIVYTSADPVLQIAAHEDIIPVEELYKICEYARSITLERPALLGRIIARPYVGEPGNFTRTANRHDYAVSPFQDTVLNKLADAGVPTYAVGKINDIFNGSGITNDMGHNKSNSHGIDTLIKTLQLPEFTKGFSFTNLVDFDANFGHRRDPEGYRDCLHEFDNRLPEIIANMKEDDLLLITADHGNDPTYAGTDHTREYIPLLAYSASFTGNGLIPQGHFADISATVAENFGVDIAMIGESFLGHLK</sequence>
<keyword id="KW-0963">Cytoplasm</keyword>
<keyword id="KW-0413">Isomerase</keyword>
<keyword id="KW-0464">Manganese</keyword>
<keyword id="KW-0479">Metal-binding</keyword>
<comment type="function">
    <text evidence="1">Isomerase that catalyzes the conversion of deoxy-ribose 1-phosphate (dRib-1-P) and ribose 1-phosphate (Rib-1-P) to deoxy-ribose 5-phosphate (dRib-5-P) and ribose 5-phosphate (Rib-5-P), respectively.</text>
</comment>
<comment type="catalytic activity">
    <reaction evidence="1">
        <text>2-deoxy-alpha-D-ribose 1-phosphate = 2-deoxy-D-ribose 5-phosphate</text>
        <dbReference type="Rhea" id="RHEA:27658"/>
        <dbReference type="ChEBI" id="CHEBI:57259"/>
        <dbReference type="ChEBI" id="CHEBI:62877"/>
        <dbReference type="EC" id="5.4.2.7"/>
    </reaction>
</comment>
<comment type="catalytic activity">
    <reaction evidence="1">
        <text>alpha-D-ribose 1-phosphate = D-ribose 5-phosphate</text>
        <dbReference type="Rhea" id="RHEA:18793"/>
        <dbReference type="ChEBI" id="CHEBI:57720"/>
        <dbReference type="ChEBI" id="CHEBI:78346"/>
        <dbReference type="EC" id="5.4.2.7"/>
    </reaction>
</comment>
<comment type="cofactor">
    <cofactor evidence="1">
        <name>Mn(2+)</name>
        <dbReference type="ChEBI" id="CHEBI:29035"/>
    </cofactor>
    <text evidence="1">Binds 2 manganese ions.</text>
</comment>
<comment type="pathway">
    <text evidence="1">Carbohydrate degradation; 2-deoxy-D-ribose 1-phosphate degradation; D-glyceraldehyde 3-phosphate and acetaldehyde from 2-deoxy-alpha-D-ribose 1-phosphate: step 1/2.</text>
</comment>
<comment type="subcellular location">
    <subcellularLocation>
        <location evidence="1">Cytoplasm</location>
    </subcellularLocation>
</comment>
<comment type="similarity">
    <text evidence="1">Belongs to the phosphopentomutase family.</text>
</comment>
<feature type="chain" id="PRO_0000258315" description="Phosphopentomutase">
    <location>
        <begin position="1"/>
        <end position="403"/>
    </location>
</feature>
<feature type="binding site" evidence="1">
    <location>
        <position position="13"/>
    </location>
    <ligand>
        <name>Mn(2+)</name>
        <dbReference type="ChEBI" id="CHEBI:29035"/>
        <label>1</label>
    </ligand>
</feature>
<feature type="binding site" evidence="1">
    <location>
        <position position="298"/>
    </location>
    <ligand>
        <name>Mn(2+)</name>
        <dbReference type="ChEBI" id="CHEBI:29035"/>
        <label>2</label>
    </ligand>
</feature>
<feature type="binding site" evidence="1">
    <location>
        <position position="303"/>
    </location>
    <ligand>
        <name>Mn(2+)</name>
        <dbReference type="ChEBI" id="CHEBI:29035"/>
        <label>2</label>
    </ligand>
</feature>
<feature type="binding site" evidence="1">
    <location>
        <position position="339"/>
    </location>
    <ligand>
        <name>Mn(2+)</name>
        <dbReference type="ChEBI" id="CHEBI:29035"/>
        <label>1</label>
    </ligand>
</feature>
<feature type="binding site" evidence="1">
    <location>
        <position position="340"/>
    </location>
    <ligand>
        <name>Mn(2+)</name>
        <dbReference type="ChEBI" id="CHEBI:29035"/>
        <label>1</label>
    </ligand>
</feature>
<feature type="binding site" evidence="1">
    <location>
        <position position="351"/>
    </location>
    <ligand>
        <name>Mn(2+)</name>
        <dbReference type="ChEBI" id="CHEBI:29035"/>
        <label>2</label>
    </ligand>
</feature>
<dbReference type="EC" id="5.4.2.7" evidence="1"/>
<dbReference type="EMBL" id="CP000056">
    <property type="protein sequence ID" value="AAX71789.1"/>
    <property type="molecule type" value="Genomic_DNA"/>
</dbReference>
<dbReference type="RefSeq" id="WP_011284705.1">
    <property type="nucleotide sequence ID" value="NC_007296.2"/>
</dbReference>
<dbReference type="SMR" id="Q48U17"/>
<dbReference type="KEGG" id="spb:M28_Spy0676"/>
<dbReference type="HOGENOM" id="CLU_053861_0_0_9"/>
<dbReference type="UniPathway" id="UPA00002">
    <property type="reaction ID" value="UER00467"/>
</dbReference>
<dbReference type="GO" id="GO:0005829">
    <property type="term" value="C:cytosol"/>
    <property type="evidence" value="ECO:0007669"/>
    <property type="project" value="TreeGrafter"/>
</dbReference>
<dbReference type="GO" id="GO:0000287">
    <property type="term" value="F:magnesium ion binding"/>
    <property type="evidence" value="ECO:0007669"/>
    <property type="project" value="InterPro"/>
</dbReference>
<dbReference type="GO" id="GO:0030145">
    <property type="term" value="F:manganese ion binding"/>
    <property type="evidence" value="ECO:0007669"/>
    <property type="project" value="UniProtKB-UniRule"/>
</dbReference>
<dbReference type="GO" id="GO:0008973">
    <property type="term" value="F:phosphopentomutase activity"/>
    <property type="evidence" value="ECO:0007669"/>
    <property type="project" value="UniProtKB-UniRule"/>
</dbReference>
<dbReference type="GO" id="GO:0006018">
    <property type="term" value="P:2-deoxyribose 1-phosphate catabolic process"/>
    <property type="evidence" value="ECO:0007669"/>
    <property type="project" value="UniProtKB-UniRule"/>
</dbReference>
<dbReference type="GO" id="GO:0006015">
    <property type="term" value="P:5-phosphoribose 1-diphosphate biosynthetic process"/>
    <property type="evidence" value="ECO:0007669"/>
    <property type="project" value="UniProtKB-UniPathway"/>
</dbReference>
<dbReference type="GO" id="GO:0043094">
    <property type="term" value="P:metabolic compound salvage"/>
    <property type="evidence" value="ECO:0007669"/>
    <property type="project" value="InterPro"/>
</dbReference>
<dbReference type="GO" id="GO:0009117">
    <property type="term" value="P:nucleotide metabolic process"/>
    <property type="evidence" value="ECO:0007669"/>
    <property type="project" value="InterPro"/>
</dbReference>
<dbReference type="CDD" id="cd16009">
    <property type="entry name" value="PPM"/>
    <property type="match status" value="1"/>
</dbReference>
<dbReference type="FunFam" id="3.30.70.1250:FF:000001">
    <property type="entry name" value="Phosphopentomutase"/>
    <property type="match status" value="1"/>
</dbReference>
<dbReference type="Gene3D" id="3.40.720.10">
    <property type="entry name" value="Alkaline Phosphatase, subunit A"/>
    <property type="match status" value="1"/>
</dbReference>
<dbReference type="Gene3D" id="3.30.70.1250">
    <property type="entry name" value="Phosphopentomutase"/>
    <property type="match status" value="1"/>
</dbReference>
<dbReference type="HAMAP" id="MF_00740">
    <property type="entry name" value="Phosphopentomut"/>
    <property type="match status" value="1"/>
</dbReference>
<dbReference type="InterPro" id="IPR017850">
    <property type="entry name" value="Alkaline_phosphatase_core_sf"/>
</dbReference>
<dbReference type="InterPro" id="IPR010045">
    <property type="entry name" value="DeoB"/>
</dbReference>
<dbReference type="InterPro" id="IPR006124">
    <property type="entry name" value="Metalloenzyme"/>
</dbReference>
<dbReference type="InterPro" id="IPR024052">
    <property type="entry name" value="Phosphopentomutase_DeoB_cap_sf"/>
</dbReference>
<dbReference type="NCBIfam" id="TIGR01696">
    <property type="entry name" value="deoB"/>
    <property type="match status" value="1"/>
</dbReference>
<dbReference type="NCBIfam" id="NF003766">
    <property type="entry name" value="PRK05362.1"/>
    <property type="match status" value="1"/>
</dbReference>
<dbReference type="PANTHER" id="PTHR21110">
    <property type="entry name" value="PHOSPHOPENTOMUTASE"/>
    <property type="match status" value="1"/>
</dbReference>
<dbReference type="PANTHER" id="PTHR21110:SF0">
    <property type="entry name" value="PHOSPHOPENTOMUTASE"/>
    <property type="match status" value="1"/>
</dbReference>
<dbReference type="Pfam" id="PF01676">
    <property type="entry name" value="Metalloenzyme"/>
    <property type="match status" value="1"/>
</dbReference>
<dbReference type="PIRSF" id="PIRSF001491">
    <property type="entry name" value="Ppentomutase"/>
    <property type="match status" value="1"/>
</dbReference>
<dbReference type="SUPFAM" id="SSF53649">
    <property type="entry name" value="Alkaline phosphatase-like"/>
    <property type="match status" value="1"/>
</dbReference>
<dbReference type="SUPFAM" id="SSF143856">
    <property type="entry name" value="DeoB insert domain-like"/>
    <property type="match status" value="1"/>
</dbReference>
<organism>
    <name type="scientific">Streptococcus pyogenes serotype M28 (strain MGAS6180)</name>
    <dbReference type="NCBI Taxonomy" id="319701"/>
    <lineage>
        <taxon>Bacteria</taxon>
        <taxon>Bacillati</taxon>
        <taxon>Bacillota</taxon>
        <taxon>Bacilli</taxon>
        <taxon>Lactobacillales</taxon>
        <taxon>Streptococcaceae</taxon>
        <taxon>Streptococcus</taxon>
    </lineage>
</organism>
<evidence type="ECO:0000255" key="1">
    <source>
        <dbReference type="HAMAP-Rule" id="MF_00740"/>
    </source>
</evidence>
<accession>Q48U17</accession>
<name>DEOB_STRPM</name>
<gene>
    <name evidence="1" type="primary">deoB</name>
    <name type="ordered locus">M28_Spy0676</name>
</gene>
<protein>
    <recommendedName>
        <fullName evidence="1">Phosphopentomutase</fullName>
        <ecNumber evidence="1">5.4.2.7</ecNumber>
    </recommendedName>
    <alternativeName>
        <fullName evidence="1">Phosphodeoxyribomutase</fullName>
    </alternativeName>
</protein>
<proteinExistence type="inferred from homology"/>